<protein>
    <recommendedName>
        <fullName>Sorting nexin-11</fullName>
    </recommendedName>
</protein>
<keyword id="KW-1003">Cell membrane</keyword>
<keyword id="KW-0963">Cytoplasm</keyword>
<keyword id="KW-0967">Endosome</keyword>
<keyword id="KW-0446">Lipid-binding</keyword>
<keyword id="KW-0472">Membrane</keyword>
<keyword id="KW-0653">Protein transport</keyword>
<keyword id="KW-1185">Reference proteome</keyword>
<keyword id="KW-0813">Transport</keyword>
<organism>
    <name type="scientific">Bos taurus</name>
    <name type="common">Bovine</name>
    <dbReference type="NCBI Taxonomy" id="9913"/>
    <lineage>
        <taxon>Eukaryota</taxon>
        <taxon>Metazoa</taxon>
        <taxon>Chordata</taxon>
        <taxon>Craniata</taxon>
        <taxon>Vertebrata</taxon>
        <taxon>Euteleostomi</taxon>
        <taxon>Mammalia</taxon>
        <taxon>Eutheria</taxon>
        <taxon>Laurasiatheria</taxon>
        <taxon>Artiodactyla</taxon>
        <taxon>Ruminantia</taxon>
        <taxon>Pecora</taxon>
        <taxon>Bovidae</taxon>
        <taxon>Bovinae</taxon>
        <taxon>Bos</taxon>
    </lineage>
</organism>
<dbReference type="EMBL" id="BC123805">
    <property type="protein sequence ID" value="AAI23806.1"/>
    <property type="molecule type" value="mRNA"/>
</dbReference>
<dbReference type="RefSeq" id="NP_001070372.1">
    <property type="nucleotide sequence ID" value="NM_001076904.1"/>
</dbReference>
<dbReference type="RefSeq" id="XP_059734121.1">
    <property type="nucleotide sequence ID" value="XM_059878138.1"/>
</dbReference>
<dbReference type="SMR" id="Q08DD7"/>
<dbReference type="FunCoup" id="Q08DD7">
    <property type="interactions" value="2019"/>
</dbReference>
<dbReference type="STRING" id="9913.ENSBTAP00000027082"/>
<dbReference type="PaxDb" id="9913-ENSBTAP00000027082"/>
<dbReference type="GeneID" id="534567"/>
<dbReference type="KEGG" id="bta:534567"/>
<dbReference type="CTD" id="29916"/>
<dbReference type="VEuPathDB" id="HostDB:ENSBTAG00000020321"/>
<dbReference type="eggNOG" id="KOG2527">
    <property type="taxonomic scope" value="Eukaryota"/>
</dbReference>
<dbReference type="HOGENOM" id="CLU_057172_3_0_1"/>
<dbReference type="InParanoid" id="Q08DD7"/>
<dbReference type="OMA" id="SCCFIRR"/>
<dbReference type="OrthoDB" id="5227681at2759"/>
<dbReference type="TreeFam" id="TF332117"/>
<dbReference type="Proteomes" id="UP000009136">
    <property type="component" value="Chromosome 19"/>
</dbReference>
<dbReference type="Bgee" id="ENSBTAG00000020321">
    <property type="expression patterns" value="Expressed in oocyte and 105 other cell types or tissues"/>
</dbReference>
<dbReference type="GO" id="GO:0005737">
    <property type="term" value="C:cytoplasm"/>
    <property type="evidence" value="ECO:0000250"/>
    <property type="project" value="UniProtKB"/>
</dbReference>
<dbReference type="GO" id="GO:0005768">
    <property type="term" value="C:endosome"/>
    <property type="evidence" value="ECO:0000250"/>
    <property type="project" value="UniProtKB"/>
</dbReference>
<dbReference type="GO" id="GO:0005886">
    <property type="term" value="C:plasma membrane"/>
    <property type="evidence" value="ECO:0000250"/>
    <property type="project" value="UniProtKB"/>
</dbReference>
<dbReference type="GO" id="GO:1901981">
    <property type="term" value="F:phosphatidylinositol phosphate binding"/>
    <property type="evidence" value="ECO:0000250"/>
    <property type="project" value="UniProtKB"/>
</dbReference>
<dbReference type="GO" id="GO:0006886">
    <property type="term" value="P:intracellular protein transport"/>
    <property type="evidence" value="ECO:0007669"/>
    <property type="project" value="InterPro"/>
</dbReference>
<dbReference type="GO" id="GO:0016050">
    <property type="term" value="P:vesicle organization"/>
    <property type="evidence" value="ECO:0000250"/>
    <property type="project" value="UniProtKB"/>
</dbReference>
<dbReference type="CDD" id="cd06898">
    <property type="entry name" value="PX_SNX10"/>
    <property type="match status" value="1"/>
</dbReference>
<dbReference type="FunFam" id="3.30.1520.10:FF:000012">
    <property type="entry name" value="Sorting nexin 10"/>
    <property type="match status" value="1"/>
</dbReference>
<dbReference type="Gene3D" id="3.30.1520.10">
    <property type="entry name" value="Phox-like domain"/>
    <property type="match status" value="1"/>
</dbReference>
<dbReference type="InterPro" id="IPR001683">
    <property type="entry name" value="PX_dom"/>
</dbReference>
<dbReference type="InterPro" id="IPR036871">
    <property type="entry name" value="PX_dom_sf"/>
</dbReference>
<dbReference type="InterPro" id="IPR043544">
    <property type="entry name" value="SNX10/11"/>
</dbReference>
<dbReference type="PANTHER" id="PTHR46209">
    <property type="entry name" value="PX DOMAIN-CONTAINING PROTEIN"/>
    <property type="match status" value="1"/>
</dbReference>
<dbReference type="PANTHER" id="PTHR46209:SF1">
    <property type="entry name" value="SORTING NEXIN-11"/>
    <property type="match status" value="1"/>
</dbReference>
<dbReference type="Pfam" id="PF00787">
    <property type="entry name" value="PX"/>
    <property type="match status" value="1"/>
</dbReference>
<dbReference type="SMART" id="SM00312">
    <property type="entry name" value="PX"/>
    <property type="match status" value="1"/>
</dbReference>
<dbReference type="SUPFAM" id="SSF64268">
    <property type="entry name" value="PX domain"/>
    <property type="match status" value="1"/>
</dbReference>
<dbReference type="PROSITE" id="PS50195">
    <property type="entry name" value="PX"/>
    <property type="match status" value="1"/>
</dbReference>
<gene>
    <name type="primary">SNX11</name>
</gene>
<comment type="function">
    <text evidence="1">Phosphoinositide-binding protein involved in protein sorting and membrane trafficking in endosomes. Regulates the levels of TRPV3 by promoting its trafficking from the cell membrane to lysosome for degradation.</text>
</comment>
<comment type="subunit">
    <text evidence="1">Monomer. Interacts with TRPV3; this interaction promotes TRPV3 trafficking from the cell membrane to lysosome for degradation.</text>
</comment>
<comment type="subcellular location">
    <subcellularLocation>
        <location evidence="1">Cell membrane</location>
        <topology evidence="4">Peripheral membrane protein</topology>
        <orientation evidence="4">Cytoplasmic side</orientation>
    </subcellularLocation>
    <subcellularLocation>
        <location evidence="1">Endosome</location>
    </subcellularLocation>
    <subcellularLocation>
        <location evidence="1">Cytoplasm</location>
    </subcellularLocation>
</comment>
<comment type="domain">
    <text evidence="1">The PX domain mediates interaction with membranes enriched in phosphatidylinositol 3-phosphate.</text>
</comment>
<comment type="similarity">
    <text evidence="4">Belongs to the sorting nexin family.</text>
</comment>
<feature type="chain" id="PRO_0000271385" description="Sorting nexin-11">
    <location>
        <begin position="1"/>
        <end position="270"/>
    </location>
</feature>
<feature type="domain" description="PX" evidence="2">
    <location>
        <begin position="16"/>
        <end position="132"/>
    </location>
</feature>
<feature type="region of interest" description="Important for membrane trafficking" evidence="1">
    <location>
        <begin position="135"/>
        <end position="139"/>
    </location>
</feature>
<feature type="region of interest" description="Disordered" evidence="3">
    <location>
        <begin position="168"/>
        <end position="244"/>
    </location>
</feature>
<feature type="region of interest" description="Disordered" evidence="3">
    <location>
        <begin position="251"/>
        <end position="270"/>
    </location>
</feature>
<feature type="compositionally biased region" description="Basic and acidic residues" evidence="3">
    <location>
        <begin position="168"/>
        <end position="177"/>
    </location>
</feature>
<feature type="compositionally biased region" description="Pro residues" evidence="3">
    <location>
        <begin position="218"/>
        <end position="227"/>
    </location>
</feature>
<feature type="binding site" evidence="1">
    <location>
        <position position="59"/>
    </location>
    <ligand>
        <name>a 1,2-diacyl-sn-glycero-3-phospho-(1D-myo-inositol-3-phosphate)</name>
        <dbReference type="ChEBI" id="CHEBI:58088"/>
    </ligand>
</feature>
<feature type="binding site" evidence="1">
    <location>
        <position position="85"/>
    </location>
    <ligand>
        <name>a 1,2-diacyl-sn-glycero-3-phospho-(1D-myo-inositol-3-phosphate)</name>
        <dbReference type="ChEBI" id="CHEBI:58088"/>
    </ligand>
</feature>
<feature type="binding site" evidence="1">
    <location>
        <position position="99"/>
    </location>
    <ligand>
        <name>a 1,2-diacyl-sn-glycero-3-phospho-(1D-myo-inositol-3-phosphate)</name>
        <dbReference type="ChEBI" id="CHEBI:58088"/>
    </ligand>
</feature>
<proteinExistence type="evidence at transcript level"/>
<reference key="1">
    <citation type="submission" date="2006-09" db="EMBL/GenBank/DDBJ databases">
        <authorList>
            <consortium name="NIH - Mammalian Gene Collection (MGC) project"/>
        </authorList>
    </citation>
    <scope>NUCLEOTIDE SEQUENCE [LARGE SCALE MRNA]</scope>
    <source>
        <strain>Hereford</strain>
        <tissue>Fetal skin</tissue>
    </source>
</reference>
<sequence>MGFWCRMLENQEQEEVITVRVQDPRVQNEGSWNSYVDYKIFLHTNSKAFTAKTSCVRRRYREFVWLRKQLQRNAGLVPVPELPGKSTFFGSSDEFIEKRRQGLQHFLEKVLQSVVLLSDSQLHLFLQSQLSVPEIEACVQGRSPVSVSDAILRYAMSNCGWAQEERRGSSHLAEGDQPKSCCFLPRPGRRSSPSPPPGEEKDPFEVWAPVVDSEAPPLESPTLPPTSSPSCCGFARPDEGLSASQPVRRVLGGGHAVPLDPGQLETVLEK</sequence>
<accession>Q08DD7</accession>
<name>SNX11_BOVIN</name>
<evidence type="ECO:0000250" key="1">
    <source>
        <dbReference type="UniProtKB" id="Q9Y5W9"/>
    </source>
</evidence>
<evidence type="ECO:0000255" key="2">
    <source>
        <dbReference type="PROSITE-ProRule" id="PRU00147"/>
    </source>
</evidence>
<evidence type="ECO:0000256" key="3">
    <source>
        <dbReference type="SAM" id="MobiDB-lite"/>
    </source>
</evidence>
<evidence type="ECO:0000305" key="4"/>